<protein>
    <recommendedName>
        <fullName evidence="1">Calcium channel flower</fullName>
    </recommendedName>
</protein>
<sequence length="194" mass="20664">MSFAEKITGLLARPNQQDPIGPEQPWYLKYGSRLLGIVAAFFAILFGLWNVFSIITLSVSCLVAGIIQMVAGFVVMLLEAPCCFVCFEQVNVIADKVDSKPLYFRAGLYITMAIPPIILCFGLASLFGSGLIFGTGVVYGMMALGKKASAEDMRAAAQQTFGGNTPAQTNDRAGIVNNAQPFSFTGAVGTDSNV</sequence>
<keyword id="KW-0106">Calcium</keyword>
<keyword id="KW-0107">Calcium channel</keyword>
<keyword id="KW-0109">Calcium transport</keyword>
<keyword id="KW-1003">Cell membrane</keyword>
<keyword id="KW-0966">Cell projection</keyword>
<keyword id="KW-0968">Cytoplasmic vesicle</keyword>
<keyword id="KW-0254">Endocytosis</keyword>
<keyword id="KW-0967">Endosome</keyword>
<keyword id="KW-0407">Ion channel</keyword>
<keyword id="KW-0406">Ion transport</keyword>
<keyword id="KW-0472">Membrane</keyword>
<keyword id="KW-0770">Synapse</keyword>
<keyword id="KW-0812">Transmembrane</keyword>
<keyword id="KW-1133">Transmembrane helix</keyword>
<keyword id="KW-0813">Transport</keyword>
<dbReference type="EMBL" id="CM000159">
    <property type="protein sequence ID" value="EDW94933.1"/>
    <property type="molecule type" value="Genomic_DNA"/>
</dbReference>
<dbReference type="RefSeq" id="XP_002095221.1">
    <property type="nucleotide sequence ID" value="XM_002095185.2"/>
</dbReference>
<dbReference type="SMR" id="B4PD01"/>
<dbReference type="EnsemblMetazoa" id="FBtr0266330">
    <property type="protein sequence ID" value="FBpp0264822"/>
    <property type="gene ID" value="FBgn0237144"/>
</dbReference>
<dbReference type="EnsemblMetazoa" id="XM_039373905.2">
    <property type="protein sequence ID" value="XP_039229839.1"/>
    <property type="gene ID" value="LOC26536417"/>
</dbReference>
<dbReference type="KEGG" id="dya:Dyak_GE19812"/>
<dbReference type="eggNOG" id="KOG4085">
    <property type="taxonomic scope" value="Eukaryota"/>
</dbReference>
<dbReference type="HOGENOM" id="CLU_108196_0_0_1"/>
<dbReference type="OMA" id="YWQKAAL"/>
<dbReference type="OrthoDB" id="9934994at2759"/>
<dbReference type="PhylomeDB" id="B4PD01"/>
<dbReference type="Proteomes" id="UP000002282">
    <property type="component" value="Chromosome 3L"/>
</dbReference>
<dbReference type="GO" id="GO:0042995">
    <property type="term" value="C:cell projection"/>
    <property type="evidence" value="ECO:0007669"/>
    <property type="project" value="UniProtKB-KW"/>
</dbReference>
<dbReference type="GO" id="GO:0005768">
    <property type="term" value="C:endosome"/>
    <property type="evidence" value="ECO:0007669"/>
    <property type="project" value="UniProtKB-SubCell"/>
</dbReference>
<dbReference type="GO" id="GO:0042734">
    <property type="term" value="C:presynaptic membrane"/>
    <property type="evidence" value="ECO:0007669"/>
    <property type="project" value="UniProtKB-SubCell"/>
</dbReference>
<dbReference type="GO" id="GO:0030672">
    <property type="term" value="C:synaptic vesicle membrane"/>
    <property type="evidence" value="ECO:0000250"/>
    <property type="project" value="UniProtKB"/>
</dbReference>
<dbReference type="GO" id="GO:0005262">
    <property type="term" value="F:calcium channel activity"/>
    <property type="evidence" value="ECO:0007669"/>
    <property type="project" value="UniProtKB-KW"/>
</dbReference>
<dbReference type="GO" id="GO:0042802">
    <property type="term" value="F:identical protein binding"/>
    <property type="evidence" value="ECO:0007669"/>
    <property type="project" value="EnsemblMetazoa"/>
</dbReference>
<dbReference type="GO" id="GO:0150008">
    <property type="term" value="P:bulk synaptic vesicle endocytosis"/>
    <property type="evidence" value="ECO:0007669"/>
    <property type="project" value="EnsemblMetazoa"/>
</dbReference>
<dbReference type="GO" id="GO:0035212">
    <property type="term" value="P:cell competition in a multicellular organism"/>
    <property type="evidence" value="ECO:0007669"/>
    <property type="project" value="EnsemblMetazoa"/>
</dbReference>
<dbReference type="GO" id="GO:0150007">
    <property type="term" value="P:clathrin-dependent synaptic vesicle endocytosis"/>
    <property type="evidence" value="ECO:0007669"/>
    <property type="project" value="EnsemblMetazoa"/>
</dbReference>
<dbReference type="GO" id="GO:0046530">
    <property type="term" value="P:photoreceptor cell differentiation"/>
    <property type="evidence" value="ECO:0000250"/>
    <property type="project" value="UniProtKB"/>
</dbReference>
<dbReference type="GO" id="GO:0043525">
    <property type="term" value="P:positive regulation of neuron apoptotic process"/>
    <property type="evidence" value="ECO:0007669"/>
    <property type="project" value="EnsemblMetazoa"/>
</dbReference>
<dbReference type="GO" id="GO:0099533">
    <property type="term" value="P:positive regulation of presynaptic cytosolic calcium concentration"/>
    <property type="evidence" value="ECO:0007669"/>
    <property type="project" value="EnsemblMetazoa"/>
</dbReference>
<dbReference type="GO" id="GO:0048488">
    <property type="term" value="P:synaptic vesicle endocytosis"/>
    <property type="evidence" value="ECO:0000250"/>
    <property type="project" value="UniProtKB"/>
</dbReference>
<dbReference type="InterPro" id="IPR019365">
    <property type="entry name" value="TVP18/Ca-channel_flower"/>
</dbReference>
<dbReference type="PANTHER" id="PTHR13314">
    <property type="entry name" value="CALCIUM CHANNEL FLOWER HOMOLOG"/>
    <property type="match status" value="1"/>
</dbReference>
<dbReference type="PANTHER" id="PTHR13314:SF2">
    <property type="entry name" value="CALCIUM CHANNEL FLOWER HOMOLOG"/>
    <property type="match status" value="1"/>
</dbReference>
<dbReference type="Pfam" id="PF10233">
    <property type="entry name" value="Cg6151-P"/>
    <property type="match status" value="1"/>
</dbReference>
<dbReference type="SMART" id="SM01077">
    <property type="entry name" value="Cg6151-P"/>
    <property type="match status" value="1"/>
</dbReference>
<proteinExistence type="inferred from homology"/>
<evidence type="ECO:0000250" key="1">
    <source>
        <dbReference type="UniProtKB" id="Q95T12"/>
    </source>
</evidence>
<evidence type="ECO:0000255" key="2"/>
<evidence type="ECO:0000305" key="3"/>
<evidence type="ECO:0000312" key="4">
    <source>
        <dbReference type="EMBL" id="EDW94933.1"/>
    </source>
</evidence>
<name>FLOWR_DROYA</name>
<organism>
    <name type="scientific">Drosophila yakuba</name>
    <name type="common">Fruit fly</name>
    <dbReference type="NCBI Taxonomy" id="7245"/>
    <lineage>
        <taxon>Eukaryota</taxon>
        <taxon>Metazoa</taxon>
        <taxon>Ecdysozoa</taxon>
        <taxon>Arthropoda</taxon>
        <taxon>Hexapoda</taxon>
        <taxon>Insecta</taxon>
        <taxon>Pterygota</taxon>
        <taxon>Neoptera</taxon>
        <taxon>Endopterygota</taxon>
        <taxon>Diptera</taxon>
        <taxon>Brachycera</taxon>
        <taxon>Muscomorpha</taxon>
        <taxon>Ephydroidea</taxon>
        <taxon>Drosophilidae</taxon>
        <taxon>Drosophila</taxon>
        <taxon>Sophophora</taxon>
    </lineage>
</organism>
<feature type="chain" id="PRO_0000389241" description="Calcium channel flower">
    <location>
        <begin position="1"/>
        <end position="194"/>
    </location>
</feature>
<feature type="transmembrane region" description="Helical" evidence="2">
    <location>
        <begin position="35"/>
        <end position="55"/>
    </location>
</feature>
<feature type="transmembrane region" description="Helical" evidence="2">
    <location>
        <begin position="66"/>
        <end position="88"/>
    </location>
</feature>
<feature type="transmembrane region" description="Helical" evidence="2">
    <location>
        <begin position="113"/>
        <end position="133"/>
    </location>
</feature>
<feature type="site" description="Calcium ion selectivity" evidence="1">
    <location>
        <position position="79"/>
    </location>
</feature>
<reference evidence="4" key="1">
    <citation type="journal article" date="2007" name="Nature">
        <title>Evolution of genes and genomes on the Drosophila phylogeny.</title>
        <authorList>
            <consortium name="Drosophila 12 genomes consortium"/>
        </authorList>
    </citation>
    <scope>NUCLEOTIDE SEQUENCE [LARGE SCALE GENOMIC DNA]</scope>
    <source>
        <strain evidence="4">Tai18E2 / Tucson 14021-0261.01</strain>
    </source>
</reference>
<comment type="function">
    <text evidence="1">Transmembrane protein which mediates synaptic endocytosis, fitness-based cell culling, neuronal culling, morphogen gradient scaling, and calcium transport. Regulates synaptic endocytosis and hence couples exo- with endocytosis. Controls two major modes of synaptic vesicle (SV) endocytosis in the synaptic boutons of neuromuscular junctions (NMJs); Ca(2+) channel-independent Clathrin-mediated endocytosis (CME) in response to mild stimulation, and Ca(2+) channel-dependent activity-dependent bulk endocytosis (ADBE) in response to strong stimulation. Functions in ADBE and subsequent SV reformation from bulk endosomes by initiating Ca(2+) channel-dependent phosphatidylinositol 4,5-bisphosphate (PtdIns(4,5)P2) compartmentalization in synaptic boutons. There it acts at the periactive zone to provide the low Ca(2+) levels required to initiate Calcineurin activation and upregulate PtdIns(4,5)P2. Conversely PtdIns(4,5)P2 enhances fwe Ca(2+) channel-activity, establishing a positive feedback loop that induces PtdIns(4,5)P2 microdomain at the periactive zone. These microdomains trigger bulk membrane invagination (i.e. ADBE) by triggering actin polymerization while also promoting localization of fwe to bulk endosomes, thereby removing the ADBE trigger to reduce endocytosis and prevent excess membrane uptake. PtdIns(4,5)P2 then promotes SV reformation from the bulk endosomes, to coordinate ADBE and subsequent SV reformation. Different combinations of the flower isoforms at the cell membrane are also required for the identification and elimination of suboptimal or supernumerary cells during development, regeneration, and adulthood. Required for the recognition and elimination of unfit cells in the developing wing during cell competition. In the developing pupal retina, mediates the elimination of unwanted postmitotic neurons, including supernumerary photoreceptor neurons that form at the periphery of the retina and are contained within incomplete ommatidia units. Also required for efficient elimination and replacement of old neurons by newly generated neurons during regeneration in the adult brain following mechanical injury. Downstream of the flower fitness fingerprints, cells identified as unwanted or unfit are eliminated via apoptosis through the expression of ahuizotl (azot). However, the cells marked for elimination by the flower isoforms only undergo apoptosis if additional thresholds are met; (1) their neighboring fit/healthy cells express different levels of the fwe isoforms, and (2) the levels of the protective signal SPARC expressed by the loser or unwanted cells are unable to inhibit caspase activation. These additional thresholds for flower-mediated apoptosis, allows useful cells to recover from transient and limited stress before they are unnecessarily eliminated. Functions with dally and magu in a mechanism of scaling, which utilises apoptosis to ensure that the dpp morphogen gradient, which mediates organ growth, remains proportional to the size of the growing wing. In this mechanism, fwe represses dally- and Magu-dependent activity in expanding the gradient, and dally/Magu inhibits fwe-dependent apoptosis to keep cell death rate low. When the levels of these different proteins are optimally regulated the gradient correctly scales with organ growth but when this fails, fwe-mediated apoptosis is activated to trim the developing tissue to match the correct size of the gradient.</text>
</comment>
<comment type="activity regulation">
    <text evidence="1">Channel activity is inhibited by La(3+), which reduces Ca(2+) influx and thus inhibits it's function in promoting activity-dependent bulk endocytosis (ADBE) in response to high stimuli.</text>
</comment>
<comment type="subunit">
    <text evidence="1">Homomultimer. Associates with the dally/ magu complex.</text>
</comment>
<comment type="subcellular location">
    <subcellularLocation>
        <location evidence="1">Cytoplasmic vesicle</location>
        <location evidence="1">Secretory vesicle</location>
        <location evidence="1">Synaptic vesicle membrane</location>
        <topology evidence="1">Multi-pass membrane protein</topology>
    </subcellularLocation>
    <subcellularLocation>
        <location evidence="1">Presynaptic cell membrane</location>
    </subcellularLocation>
    <subcellularLocation>
        <location evidence="1">Endosome</location>
    </subcellularLocation>
    <text evidence="1">Upon fusion of the synaptic vesicle (SV) with the presynaptic membrane, protein transfers from the SV to the periactive zones where endocytosis is known to occur. Upon high K(+) stimulation, expression levels in NMJ boutons are higher in bulk endosomes than in synaptic vesicles, suggesting that it is recycled to bulk endosomes after it activates ADBE.</text>
</comment>
<comment type="similarity">
    <text evidence="3">Belongs to the calcium channel flower family.</text>
</comment>
<accession>B4PD01</accession>
<gene>
    <name evidence="1" type="primary">flower</name>
    <name type="ORF">GE19812</name>
</gene>